<keyword id="KW-0007">Acetylation</keyword>
<keyword id="KW-0963">Cytoplasm</keyword>
<keyword id="KW-0391">Immunity</keyword>
<keyword id="KW-0399">Innate immunity</keyword>
<keyword id="KW-1017">Isopeptide bond</keyword>
<keyword id="KW-0539">Nucleus</keyword>
<keyword id="KW-0597">Phosphoprotein</keyword>
<keyword id="KW-1185">Reference proteome</keyword>
<keyword id="KW-0677">Repeat</keyword>
<keyword id="KW-0694">RNA-binding</keyword>
<keyword id="KW-0804">Transcription</keyword>
<keyword id="KW-0805">Transcription regulation</keyword>
<keyword id="KW-0832">Ubl conjugation</keyword>
<reference key="1">
    <citation type="submission" date="2004-11" db="EMBL/GenBank/DDBJ databases">
        <authorList>
            <consortium name="The German cDNA consortium"/>
        </authorList>
    </citation>
    <scope>NUCLEOTIDE SEQUENCE [LARGE SCALE MRNA]</scope>
    <source>
        <tissue>Kidney</tissue>
    </source>
</reference>
<evidence type="ECO:0000250" key="1">
    <source>
        <dbReference type="UniProtKB" id="Q8C2Q3"/>
    </source>
</evidence>
<evidence type="ECO:0000250" key="2">
    <source>
        <dbReference type="UniProtKB" id="Q96PK6"/>
    </source>
</evidence>
<evidence type="ECO:0000255" key="3">
    <source>
        <dbReference type="PROSITE-ProRule" id="PRU00176"/>
    </source>
</evidence>
<evidence type="ECO:0000256" key="4">
    <source>
        <dbReference type="SAM" id="MobiDB-lite"/>
    </source>
</evidence>
<comment type="function">
    <text evidence="2">May function as a nuclear receptor coactivator, enhancing transcription through other coactivators such as NCOA6 and CITED1. Regulates centriole biogenesis by suppressing the formation of aberrant centriolar protein complexes in the cytoplasm and thus preserving mitotic spindle integrity. Prevents the formation of the STIL-CPAP complex (which can induce the formation of aberrant centriolar protein complexes) by interfering with the interaction of STIL with CPAP. Plays a role in the regulation of DNA virus-mediated innate immune response by assembling into the HDP-RNP complex, a complex that serves as a platform for IRF3 phosphorylation and subsequent innate immune response activation through the cGAS-STING pathway.</text>
</comment>
<comment type="subunit">
    <text evidence="2">Interacts with NCOA6, CITED1 and XRCC5/KU86. Interacts with SS18. Interacts with STIL and interferes with its interaction with CPAP. Interacts with gamma-tubulin. Part of the HDP-RNP complex composed of at least HEXIM1, PRKDC, XRCC5, XRCC6, paraspeckle proteins (SFPQ, NONO, PSPC1, RBM14, and MATR3) and NEAT1 RNA.</text>
</comment>
<comment type="subcellular location">
    <subcellularLocation>
        <location evidence="2">Nucleus</location>
    </subcellularLocation>
    <subcellularLocation>
        <location evidence="2">Nucleus</location>
        <location evidence="2">Nucleolus</location>
    </subcellularLocation>
    <subcellularLocation>
        <location evidence="2">Cytoplasm</location>
    </subcellularLocation>
    <text evidence="2">In punctate subnuclear structures often located adjacent to splicing speckles, called paraspeckles. Cytoplasmic localization is crucial for its function in suppressing the formation of aberrant centriolar protein complexes.</text>
</comment>
<gene>
    <name type="primary">RBM14</name>
</gene>
<accession>Q5RC41</accession>
<name>RBM14_PONAB</name>
<dbReference type="EMBL" id="CR858440">
    <property type="protein sequence ID" value="CAH90669.1"/>
    <property type="molecule type" value="mRNA"/>
</dbReference>
<dbReference type="RefSeq" id="NP_001125363.1">
    <property type="nucleotide sequence ID" value="NM_001131891.2"/>
</dbReference>
<dbReference type="SMR" id="Q5RC41"/>
<dbReference type="FunCoup" id="Q5RC41">
    <property type="interactions" value="2827"/>
</dbReference>
<dbReference type="STRING" id="9601.ENSPPYP00000003492"/>
<dbReference type="GeneID" id="100172266"/>
<dbReference type="KEGG" id="pon:100172266"/>
<dbReference type="CTD" id="10432"/>
<dbReference type="eggNOG" id="ENOG502R6FF">
    <property type="taxonomic scope" value="Eukaryota"/>
</dbReference>
<dbReference type="InParanoid" id="Q5RC41"/>
<dbReference type="OrthoDB" id="1879688at2759"/>
<dbReference type="Proteomes" id="UP000001595">
    <property type="component" value="Unplaced"/>
</dbReference>
<dbReference type="GO" id="GO:0005737">
    <property type="term" value="C:cytoplasm"/>
    <property type="evidence" value="ECO:0000250"/>
    <property type="project" value="UniProtKB"/>
</dbReference>
<dbReference type="GO" id="GO:0005730">
    <property type="term" value="C:nucleolus"/>
    <property type="evidence" value="ECO:0007669"/>
    <property type="project" value="UniProtKB-SubCell"/>
</dbReference>
<dbReference type="GO" id="GO:0005634">
    <property type="term" value="C:nucleus"/>
    <property type="evidence" value="ECO:0000250"/>
    <property type="project" value="UniProtKB"/>
</dbReference>
<dbReference type="GO" id="GO:0003723">
    <property type="term" value="F:RNA binding"/>
    <property type="evidence" value="ECO:0007669"/>
    <property type="project" value="UniProtKB-KW"/>
</dbReference>
<dbReference type="GO" id="GO:0098534">
    <property type="term" value="P:centriole assembly"/>
    <property type="evidence" value="ECO:0000250"/>
    <property type="project" value="UniProtKB"/>
</dbReference>
<dbReference type="GO" id="GO:0045087">
    <property type="term" value="P:innate immune response"/>
    <property type="evidence" value="ECO:0007669"/>
    <property type="project" value="UniProtKB-KW"/>
</dbReference>
<dbReference type="CDD" id="cd12608">
    <property type="entry name" value="RRM1_CoAA"/>
    <property type="match status" value="1"/>
</dbReference>
<dbReference type="CDD" id="cd12609">
    <property type="entry name" value="RRM2_CoAA"/>
    <property type="match status" value="1"/>
</dbReference>
<dbReference type="FunFam" id="3.30.70.330:FF:000046">
    <property type="entry name" value="RNA-binding protein 14 isoform X1"/>
    <property type="match status" value="2"/>
</dbReference>
<dbReference type="Gene3D" id="3.30.70.330">
    <property type="match status" value="2"/>
</dbReference>
<dbReference type="InterPro" id="IPR012677">
    <property type="entry name" value="Nucleotide-bd_a/b_plait_sf"/>
</dbReference>
<dbReference type="InterPro" id="IPR035979">
    <property type="entry name" value="RBD_domain_sf"/>
</dbReference>
<dbReference type="InterPro" id="IPR034506">
    <property type="entry name" value="RBM14_RRM1"/>
</dbReference>
<dbReference type="InterPro" id="IPR034507">
    <property type="entry name" value="RBM14_RRM2"/>
</dbReference>
<dbReference type="InterPro" id="IPR000504">
    <property type="entry name" value="RRM_dom"/>
</dbReference>
<dbReference type="InterPro" id="IPR050907">
    <property type="entry name" value="SRSF"/>
</dbReference>
<dbReference type="PANTHER" id="PTHR23147">
    <property type="entry name" value="SERINE/ARGININE RICH SPLICING FACTOR"/>
    <property type="match status" value="1"/>
</dbReference>
<dbReference type="Pfam" id="PF00076">
    <property type="entry name" value="RRM_1"/>
    <property type="match status" value="2"/>
</dbReference>
<dbReference type="SMART" id="SM00360">
    <property type="entry name" value="RRM"/>
    <property type="match status" value="2"/>
</dbReference>
<dbReference type="SUPFAM" id="SSF54928">
    <property type="entry name" value="RNA-binding domain, RBD"/>
    <property type="match status" value="2"/>
</dbReference>
<dbReference type="PROSITE" id="PS50102">
    <property type="entry name" value="RRM"/>
    <property type="match status" value="2"/>
</dbReference>
<sequence length="669" mass="69466">MKIFVGNVDGADTTPEELAALFAPYGTVMSCAVMKQFAFVHMRENAGALRAIEALHGHELRPGRALVVEMSRPRPLNTWKIFVGNVSAACTSQELRSLFERRGRVIECDVVKDYAFVHMEKEADAKAAIAQLNGKEVKGKRINVELSTKGQKKGPGLAVQSGDKTKKPGAGDTAFPGTGGFSATFDYQQAFGNSTGGFDGQARQPTPPFFGRDRSPLRRSPPRASYVAPLTAQPATYRAQPSVSLGAAYRAQPSASLGVGYRTQPMTAQAASYRAQPSVSLGAPYRGQLASPSSQSAAASSLGPYGGAQPSASALSSYGGQAAAASSLNSYGAQGSSLASYGNQPSSYGAQAASSYGVRAAASSYNTQGAASSLGSYGAQAASYGAQSAASSLAYGAQAASYNAQPSASYNAQSAPYAAQQAASYSSQPAAYVAQPATAAAYASQPAAYAAQATTPMAGSYGAQPVVQTQLNSYGAQASMGLSGSYGAQSAAAATGSYGAAAAYGAQPSATLAAPHRTQSSASLAASYAAQQHPQAAASYRGQPGNAYDGAGQPSAAYLSMSQGAVANANSTPPPYERTRLSPPRASYDDPYKKAVAMSKRYGSDRRLAELSDYRRLSESQLSFRRSPTKSSLDYRRLPDAHSDYARYSGSYNDYLRAAQMHSGYQRRM</sequence>
<organism>
    <name type="scientific">Pongo abelii</name>
    <name type="common">Sumatran orangutan</name>
    <name type="synonym">Pongo pygmaeus abelii</name>
    <dbReference type="NCBI Taxonomy" id="9601"/>
    <lineage>
        <taxon>Eukaryota</taxon>
        <taxon>Metazoa</taxon>
        <taxon>Chordata</taxon>
        <taxon>Craniata</taxon>
        <taxon>Vertebrata</taxon>
        <taxon>Euteleostomi</taxon>
        <taxon>Mammalia</taxon>
        <taxon>Eutheria</taxon>
        <taxon>Euarchontoglires</taxon>
        <taxon>Primates</taxon>
        <taxon>Haplorrhini</taxon>
        <taxon>Catarrhini</taxon>
        <taxon>Hominidae</taxon>
        <taxon>Pongo</taxon>
    </lineage>
</organism>
<protein>
    <recommendedName>
        <fullName>RNA-binding protein 14</fullName>
    </recommendedName>
    <alternativeName>
        <fullName>RNA-binding motif protein 14</fullName>
    </alternativeName>
</protein>
<feature type="chain" id="PRO_0000081776" description="RNA-binding protein 14">
    <location>
        <begin position="1"/>
        <end position="669"/>
    </location>
</feature>
<feature type="domain" description="RRM 1" evidence="3">
    <location>
        <begin position="1"/>
        <end position="73"/>
    </location>
</feature>
<feature type="domain" description="RRM 2" evidence="3">
    <location>
        <begin position="79"/>
        <end position="149"/>
    </location>
</feature>
<feature type="region of interest" description="Disordered" evidence="4">
    <location>
        <begin position="147"/>
        <end position="175"/>
    </location>
</feature>
<feature type="region of interest" description="Disordered" evidence="4">
    <location>
        <begin position="193"/>
        <end position="232"/>
    </location>
</feature>
<feature type="region of interest" description="Disordered" evidence="4">
    <location>
        <begin position="284"/>
        <end position="303"/>
    </location>
</feature>
<feature type="region of interest" description="TRBP-interacting domain; interaction with STIL" evidence="2">
    <location>
        <begin position="307"/>
        <end position="354"/>
    </location>
</feature>
<feature type="region of interest" description="Disordered" evidence="4">
    <location>
        <begin position="566"/>
        <end position="592"/>
    </location>
</feature>
<feature type="compositionally biased region" description="Low complexity" evidence="4">
    <location>
        <begin position="287"/>
        <end position="303"/>
    </location>
</feature>
<feature type="modified residue" description="Phosphoserine" evidence="2">
    <location>
        <position position="161"/>
    </location>
</feature>
<feature type="modified residue" description="N6-acetyllysine; alternate" evidence="1">
    <location>
        <position position="164"/>
    </location>
</feature>
<feature type="modified residue" description="Phosphothreonine" evidence="2">
    <location>
        <position position="206"/>
    </location>
</feature>
<feature type="modified residue" description="Phosphoserine" evidence="2">
    <location>
        <position position="220"/>
    </location>
</feature>
<feature type="modified residue" description="Phosphoserine" evidence="2">
    <location>
        <position position="242"/>
    </location>
</feature>
<feature type="modified residue" description="Phosphoserine" evidence="2">
    <location>
        <position position="244"/>
    </location>
</feature>
<feature type="modified residue" description="Phosphoserine" evidence="2">
    <location>
        <position position="256"/>
    </location>
</feature>
<feature type="modified residue" description="Phosphoserine" evidence="2">
    <location>
        <position position="272"/>
    </location>
</feature>
<feature type="modified residue" description="Phosphoserine" evidence="2">
    <location>
        <position position="280"/>
    </location>
</feature>
<feature type="modified residue" description="Phosphoserine" evidence="2">
    <location>
        <position position="520"/>
    </location>
</feature>
<feature type="modified residue" description="Phosphoserine" evidence="2">
    <location>
        <position position="523"/>
    </location>
</feature>
<feature type="modified residue" description="Phosphoserine" evidence="2">
    <location>
        <position position="527"/>
    </location>
</feature>
<feature type="modified residue" description="Phosphoserine" evidence="2">
    <location>
        <position position="562"/>
    </location>
</feature>
<feature type="modified residue" description="Phosphothreonine" evidence="2">
    <location>
        <position position="572"/>
    </location>
</feature>
<feature type="modified residue" description="Phosphoserine" evidence="2">
    <location>
        <position position="582"/>
    </location>
</feature>
<feature type="modified residue" description="Phosphoserine" evidence="2">
    <location>
        <position position="618"/>
    </location>
</feature>
<feature type="modified residue" description="Phosphoserine" evidence="2">
    <location>
        <position position="620"/>
    </location>
</feature>
<feature type="modified residue" description="Phosphoserine" evidence="2">
    <location>
        <position position="623"/>
    </location>
</feature>
<feature type="modified residue" description="Phosphoserine" evidence="2">
    <location>
        <position position="627"/>
    </location>
</feature>
<feature type="modified residue" description="Phosphoserine" evidence="2">
    <location>
        <position position="643"/>
    </location>
</feature>
<feature type="modified residue" description="Phosphoserine" evidence="2">
    <location>
        <position position="649"/>
    </location>
</feature>
<feature type="cross-link" description="Glycyl lysine isopeptide (Lys-Gly) (interchain with G-Cter in SUMO2)" evidence="2">
    <location>
        <position position="126"/>
    </location>
</feature>
<feature type="cross-link" description="Glycyl lysine isopeptide (Lys-Gly) (interchain with G-Cter in SUMO2)" evidence="2">
    <location>
        <position position="135"/>
    </location>
</feature>
<feature type="cross-link" description="Glycyl lysine isopeptide (Lys-Gly) (interchain with G-Cter in SUMO2)" evidence="2">
    <location>
        <position position="138"/>
    </location>
</feature>
<feature type="cross-link" description="Glycyl lysine isopeptide (Lys-Gly) (interchain with G-Cter in SUMO2)" evidence="2">
    <location>
        <position position="149"/>
    </location>
</feature>
<feature type="cross-link" description="Glycyl lysine isopeptide (Lys-Gly) (interchain with G-Cter in SUMO2)" evidence="2">
    <location>
        <position position="153"/>
    </location>
</feature>
<feature type="cross-link" description="Glycyl lysine isopeptide (Lys-Gly) (interchain with G-Cter in SUMO2); alternate" evidence="2">
    <location>
        <position position="164"/>
    </location>
</feature>
<feature type="cross-link" description="Glycyl lysine isopeptide (Lys-Gly) (interchain with G-Cter in SUMO2)" evidence="2">
    <location>
        <position position="600"/>
    </location>
</feature>
<proteinExistence type="evidence at transcript level"/>